<accession>Q5XI01</accession>
<proteinExistence type="evidence at protein level"/>
<comment type="function">
    <text evidence="1 2">RNA-binding protein that specifically binds distinct small nuclear RNA (snRNAs) and regulates their processing and function. Specifically binds the 7SK snRNA (7SK RNA) and acts as a core component of the 7SK ribonucleoprotein (RNP) complex, thereby acting as a negative regulator of transcription elongation by RNA polymerase II. The 7SK RNP complex sequesters the positive transcription elongation factor b (P-TEFb) in a large inactive 7SK RNP complex preventing RNA polymerase II phosphorylation and subsequent transcriptional elongation. The 7SK RNP complex also promotes snRNA gene transcription by RNA polymerase II via interaction with the little elongation complex (LEC). LARP7 specifically binds to the highly conserved 3'-terminal U-rich stretch of 7SK RNA; on stimulation, remains associated with 7SK RNA, whereas P-TEFb is released from the complex. LARP7 also acts as a regulator of mRNA splicing fidelity by promoting U6 snRNA processing. Specifically binds U6 snRNAs and associates with a subset of box C/D RNP complexes: promotes U6 snRNA 2'-O-methylation by facilitating U6 snRNA loading into box C/D RNP complexes. U6 snRNA 2'-O-methylation is required for mRNA splicing fidelity. Binds U6 snRNAs with a 5'-CAGGG-3' sequence motif (By similarity). U6 snRNA processing is required for spermatogenesis (By similarity).</text>
</comment>
<comment type="subunit">
    <text evidence="2">Core component of the 7SK RNP complex, at least composed of 7SK RNA, LARP7, MEPCE, HEXIM1 (or HEXIM2) and P-TEFb (composed of CDK9 and CCNT1/cyclin-T1). Interacts with METTL16. Interacts with RBM7; upon genotoxic stress this interaction is enhanced, triggering the release of inactive P-TEFb complex from the core, yielding to P-TEFb complex activation. Associates with box C/D small nucleolar ribonucleoprotein (snoRNP) complexes.</text>
</comment>
<comment type="subcellular location">
    <subcellularLocation>
        <location evidence="2">Nucleus</location>
        <location evidence="2">Nucleoplasm</location>
    </subcellularLocation>
</comment>
<comment type="domain">
    <text evidence="2">The xRRM domain binds the 3' end of 7SK snRNA (7SK RNA) at the top of stem-loop 4.</text>
</comment>
<comment type="similarity">
    <text evidence="7">Belongs to the LARP7 family.</text>
</comment>
<comment type="sequence caution" evidence="7">
    <conflict type="erroneous initiation">
        <sequence resource="EMBL-CDS" id="AAH83898"/>
    </conflict>
</comment>
<evidence type="ECO:0000250" key="1">
    <source>
        <dbReference type="UniProtKB" id="Q05CL8"/>
    </source>
</evidence>
<evidence type="ECO:0000250" key="2">
    <source>
        <dbReference type="UniProtKB" id="Q4G0J3"/>
    </source>
</evidence>
<evidence type="ECO:0000255" key="3">
    <source>
        <dbReference type="PROSITE-ProRule" id="PRU00176"/>
    </source>
</evidence>
<evidence type="ECO:0000255" key="4">
    <source>
        <dbReference type="PROSITE-ProRule" id="PRU00332"/>
    </source>
</evidence>
<evidence type="ECO:0000255" key="5">
    <source>
        <dbReference type="PROSITE-ProRule" id="PRU01288"/>
    </source>
</evidence>
<evidence type="ECO:0000256" key="6">
    <source>
        <dbReference type="SAM" id="MobiDB-lite"/>
    </source>
</evidence>
<evidence type="ECO:0000305" key="7"/>
<evidence type="ECO:0000312" key="8">
    <source>
        <dbReference type="RGD" id="1592474"/>
    </source>
</evidence>
<evidence type="ECO:0007744" key="9">
    <source>
    </source>
</evidence>
<dbReference type="EMBL" id="BC083898">
    <property type="protein sequence ID" value="AAH83898.1"/>
    <property type="status" value="ALT_INIT"/>
    <property type="molecule type" value="mRNA"/>
</dbReference>
<dbReference type="RefSeq" id="NP_001037755.2">
    <property type="nucleotide sequence ID" value="NM_001044290.2"/>
</dbReference>
<dbReference type="SMR" id="Q5XI01"/>
<dbReference type="BioGRID" id="601734">
    <property type="interactions" value="2"/>
</dbReference>
<dbReference type="FunCoup" id="Q5XI01">
    <property type="interactions" value="2823"/>
</dbReference>
<dbReference type="STRING" id="10116.ENSRNOP00000065357"/>
<dbReference type="iPTMnet" id="Q5XI01"/>
<dbReference type="PhosphoSitePlus" id="Q5XI01"/>
<dbReference type="jPOST" id="Q5XI01"/>
<dbReference type="PaxDb" id="10116-ENSRNOP00000065357"/>
<dbReference type="GeneID" id="686883"/>
<dbReference type="KEGG" id="rno:686883"/>
<dbReference type="AGR" id="RGD:1592474"/>
<dbReference type="CTD" id="51574"/>
<dbReference type="RGD" id="1592474">
    <property type="gene designation" value="Larp7"/>
</dbReference>
<dbReference type="eggNOG" id="KOG0118">
    <property type="taxonomic scope" value="Eukaryota"/>
</dbReference>
<dbReference type="InParanoid" id="Q5XI01"/>
<dbReference type="PhylomeDB" id="Q5XI01"/>
<dbReference type="PRO" id="PR:Q5XI01"/>
<dbReference type="Proteomes" id="UP000002494">
    <property type="component" value="Unplaced"/>
</dbReference>
<dbReference type="GO" id="GO:0120259">
    <property type="term" value="C:7SK snRNP"/>
    <property type="evidence" value="ECO:0000266"/>
    <property type="project" value="RGD"/>
</dbReference>
<dbReference type="GO" id="GO:0005654">
    <property type="term" value="C:nucleoplasm"/>
    <property type="evidence" value="ECO:0007669"/>
    <property type="project" value="UniProtKB-SubCell"/>
</dbReference>
<dbReference type="GO" id="GO:0005634">
    <property type="term" value="C:nucleus"/>
    <property type="evidence" value="ECO:0000250"/>
    <property type="project" value="UniProtKB"/>
</dbReference>
<dbReference type="GO" id="GO:1990904">
    <property type="term" value="C:ribonucleoprotein complex"/>
    <property type="evidence" value="ECO:0000250"/>
    <property type="project" value="UniProtKB"/>
</dbReference>
<dbReference type="GO" id="GO:0097322">
    <property type="term" value="F:7SK snRNA binding"/>
    <property type="evidence" value="ECO:0000250"/>
    <property type="project" value="UniProtKB"/>
</dbReference>
<dbReference type="GO" id="GO:0003723">
    <property type="term" value="F:RNA binding"/>
    <property type="evidence" value="ECO:0000318"/>
    <property type="project" value="GO_Central"/>
</dbReference>
<dbReference type="GO" id="GO:0017070">
    <property type="term" value="F:U6 snRNA binding"/>
    <property type="evidence" value="ECO:0000250"/>
    <property type="project" value="UniProtKB"/>
</dbReference>
<dbReference type="GO" id="GO:0000494">
    <property type="term" value="P:box C/D sno(s)RNA 3'-end processing"/>
    <property type="evidence" value="ECO:0000250"/>
    <property type="project" value="UniProtKB"/>
</dbReference>
<dbReference type="GO" id="GO:0030154">
    <property type="term" value="P:cell differentiation"/>
    <property type="evidence" value="ECO:0007669"/>
    <property type="project" value="UniProtKB-KW"/>
</dbReference>
<dbReference type="GO" id="GO:0036093">
    <property type="term" value="P:germ cell proliferation"/>
    <property type="evidence" value="ECO:0000266"/>
    <property type="project" value="RGD"/>
</dbReference>
<dbReference type="GO" id="GO:0006397">
    <property type="term" value="P:mRNA processing"/>
    <property type="evidence" value="ECO:0007669"/>
    <property type="project" value="UniProtKB-KW"/>
</dbReference>
<dbReference type="GO" id="GO:0000122">
    <property type="term" value="P:negative regulation of transcription by RNA polymerase II"/>
    <property type="evidence" value="ECO:0000266"/>
    <property type="project" value="RGD"/>
</dbReference>
<dbReference type="GO" id="GO:0032897">
    <property type="term" value="P:negative regulation of viral transcription"/>
    <property type="evidence" value="ECO:0000266"/>
    <property type="project" value="RGD"/>
</dbReference>
<dbReference type="GO" id="GO:1900087">
    <property type="term" value="P:positive regulation of G1/S transition of mitotic cell cycle"/>
    <property type="evidence" value="ECO:0000266"/>
    <property type="project" value="RGD"/>
</dbReference>
<dbReference type="GO" id="GO:1904871">
    <property type="term" value="P:positive regulation of protein localization to Cajal body"/>
    <property type="evidence" value="ECO:0000250"/>
    <property type="project" value="UniProtKB"/>
</dbReference>
<dbReference type="GO" id="GO:1905382">
    <property type="term" value="P:positive regulation of snRNA transcription by RNA polymerase II"/>
    <property type="evidence" value="ECO:0000250"/>
    <property type="project" value="UniProtKB"/>
</dbReference>
<dbReference type="GO" id="GO:0048024">
    <property type="term" value="P:regulation of mRNA splicing, via spliceosome"/>
    <property type="evidence" value="ECO:0000250"/>
    <property type="project" value="UniProtKB"/>
</dbReference>
<dbReference type="GO" id="GO:0008380">
    <property type="term" value="P:RNA splicing"/>
    <property type="evidence" value="ECO:0007669"/>
    <property type="project" value="UniProtKB-KW"/>
</dbReference>
<dbReference type="GO" id="GO:0007283">
    <property type="term" value="P:spermatogenesis"/>
    <property type="evidence" value="ECO:0000250"/>
    <property type="project" value="UniProtKB"/>
</dbReference>
<dbReference type="GO" id="GO:1990438">
    <property type="term" value="P:U6 2'-O-snRNA methylation"/>
    <property type="evidence" value="ECO:0000250"/>
    <property type="project" value="UniProtKB"/>
</dbReference>
<dbReference type="CDD" id="cd08032">
    <property type="entry name" value="LARP_7"/>
    <property type="match status" value="1"/>
</dbReference>
<dbReference type="CDD" id="cd12290">
    <property type="entry name" value="RRM1_LARP7"/>
    <property type="match status" value="1"/>
</dbReference>
<dbReference type="CDD" id="cd12542">
    <property type="entry name" value="RRM2_LARP7"/>
    <property type="match status" value="1"/>
</dbReference>
<dbReference type="FunFam" id="1.10.10.10:FF:000158">
    <property type="entry name" value="La ribonucleoprotein domain family member 7"/>
    <property type="match status" value="1"/>
</dbReference>
<dbReference type="FunFam" id="3.30.70.330:FF:000281">
    <property type="entry name" value="la-related protein 7 isoform X1"/>
    <property type="match status" value="1"/>
</dbReference>
<dbReference type="FunFam" id="3.30.70.330:FF:000379">
    <property type="entry name" value="la-related protein 7 isoform X2"/>
    <property type="match status" value="1"/>
</dbReference>
<dbReference type="Gene3D" id="3.30.70.330">
    <property type="match status" value="2"/>
</dbReference>
<dbReference type="Gene3D" id="1.10.10.10">
    <property type="entry name" value="Winged helix-like DNA-binding domain superfamily/Winged helix DNA-binding domain"/>
    <property type="match status" value="1"/>
</dbReference>
<dbReference type="InterPro" id="IPR045180">
    <property type="entry name" value="La_dom_prot"/>
</dbReference>
<dbReference type="InterPro" id="IPR006630">
    <property type="entry name" value="La_HTH"/>
</dbReference>
<dbReference type="InterPro" id="IPR014886">
    <property type="entry name" value="La_xRRM"/>
</dbReference>
<dbReference type="InterPro" id="IPR034946">
    <property type="entry name" value="LARP7_La"/>
</dbReference>
<dbReference type="InterPro" id="IPR034887">
    <property type="entry name" value="LARP7_RRM1"/>
</dbReference>
<dbReference type="InterPro" id="IPR034910">
    <property type="entry name" value="LARP7_RRM2"/>
</dbReference>
<dbReference type="InterPro" id="IPR002344">
    <property type="entry name" value="Lupus_La"/>
</dbReference>
<dbReference type="InterPro" id="IPR012677">
    <property type="entry name" value="Nucleotide-bd_a/b_plait_sf"/>
</dbReference>
<dbReference type="InterPro" id="IPR035979">
    <property type="entry name" value="RBD_domain_sf"/>
</dbReference>
<dbReference type="InterPro" id="IPR000504">
    <property type="entry name" value="RRM_dom"/>
</dbReference>
<dbReference type="InterPro" id="IPR036388">
    <property type="entry name" value="WH-like_DNA-bd_sf"/>
</dbReference>
<dbReference type="InterPro" id="IPR036390">
    <property type="entry name" value="WH_DNA-bd_sf"/>
</dbReference>
<dbReference type="PANTHER" id="PTHR22792:SF62">
    <property type="entry name" value="LA-RELATED PROTEIN 7"/>
    <property type="match status" value="1"/>
</dbReference>
<dbReference type="PANTHER" id="PTHR22792">
    <property type="entry name" value="LUPUS LA PROTEIN-RELATED"/>
    <property type="match status" value="1"/>
</dbReference>
<dbReference type="Pfam" id="PF05383">
    <property type="entry name" value="La"/>
    <property type="match status" value="1"/>
</dbReference>
<dbReference type="Pfam" id="PF00076">
    <property type="entry name" value="RRM_1"/>
    <property type="match status" value="1"/>
</dbReference>
<dbReference type="Pfam" id="PF08777">
    <property type="entry name" value="RRM_3"/>
    <property type="match status" value="1"/>
</dbReference>
<dbReference type="PRINTS" id="PR00302">
    <property type="entry name" value="LUPUSLA"/>
</dbReference>
<dbReference type="SMART" id="SM00715">
    <property type="entry name" value="LA"/>
    <property type="match status" value="1"/>
</dbReference>
<dbReference type="SMART" id="SM00360">
    <property type="entry name" value="RRM"/>
    <property type="match status" value="1"/>
</dbReference>
<dbReference type="SUPFAM" id="SSF54928">
    <property type="entry name" value="RNA-binding domain, RBD"/>
    <property type="match status" value="2"/>
</dbReference>
<dbReference type="SUPFAM" id="SSF46785">
    <property type="entry name" value="Winged helix' DNA-binding domain"/>
    <property type="match status" value="1"/>
</dbReference>
<dbReference type="PROSITE" id="PS50961">
    <property type="entry name" value="HTH_LA"/>
    <property type="match status" value="1"/>
</dbReference>
<dbReference type="PROSITE" id="PS50102">
    <property type="entry name" value="RRM"/>
    <property type="match status" value="1"/>
</dbReference>
<dbReference type="PROSITE" id="PS51939">
    <property type="entry name" value="XRRM"/>
    <property type="match status" value="1"/>
</dbReference>
<feature type="chain" id="PRO_0000281679" description="La-related protein 7">
    <location>
        <begin position="1"/>
        <end position="571"/>
    </location>
</feature>
<feature type="domain" description="HTH La-type RNA-binding" evidence="4">
    <location>
        <begin position="23"/>
        <end position="117"/>
    </location>
</feature>
<feature type="domain" description="RRM" evidence="3">
    <location>
        <begin position="120"/>
        <end position="198"/>
    </location>
</feature>
<feature type="domain" description="xRRM" evidence="5">
    <location>
        <begin position="439"/>
        <end position="552"/>
    </location>
</feature>
<feature type="region of interest" description="Disordered" evidence="6">
    <location>
        <begin position="1"/>
        <end position="25"/>
    </location>
</feature>
<feature type="region of interest" description="Disordered" evidence="6">
    <location>
        <begin position="181"/>
        <end position="366"/>
    </location>
</feature>
<feature type="region of interest" description="Disordered" evidence="6">
    <location>
        <begin position="411"/>
        <end position="432"/>
    </location>
</feature>
<feature type="compositionally biased region" description="Basic and acidic residues" evidence="6">
    <location>
        <begin position="1"/>
        <end position="17"/>
    </location>
</feature>
<feature type="compositionally biased region" description="Basic residues" evidence="6">
    <location>
        <begin position="214"/>
        <end position="223"/>
    </location>
</feature>
<feature type="compositionally biased region" description="Basic and acidic residues" evidence="6">
    <location>
        <begin position="287"/>
        <end position="296"/>
    </location>
</feature>
<feature type="compositionally biased region" description="Basic and acidic residues" evidence="6">
    <location>
        <begin position="342"/>
        <end position="351"/>
    </location>
</feature>
<feature type="compositionally biased region" description="Basic residues" evidence="6">
    <location>
        <begin position="352"/>
        <end position="365"/>
    </location>
</feature>
<feature type="compositionally biased region" description="Polar residues" evidence="6">
    <location>
        <begin position="423"/>
        <end position="432"/>
    </location>
</feature>
<feature type="modified residue" description="N-acetylmethionine" evidence="2">
    <location>
        <position position="1"/>
    </location>
</feature>
<feature type="modified residue" description="Phosphothreonine" evidence="1">
    <location>
        <position position="252"/>
    </location>
</feature>
<feature type="modified residue" description="Phosphoserine" evidence="9">
    <location>
        <position position="254"/>
    </location>
</feature>
<feature type="modified residue" description="Phosphoserine" evidence="9">
    <location>
        <position position="257"/>
    </location>
</feature>
<feature type="modified residue" description="Phosphothreonine" evidence="1">
    <location>
        <position position="261"/>
    </location>
</feature>
<feature type="modified residue" description="Phosphoserine" evidence="2">
    <location>
        <position position="294"/>
    </location>
</feature>
<feature type="modified residue" description="Phosphoserine" evidence="2">
    <location>
        <position position="295"/>
    </location>
</feature>
<feature type="modified residue" description="Phosphoserine" evidence="2">
    <location>
        <position position="335"/>
    </location>
</feature>
<feature type="modified residue" description="Phosphothreonine" evidence="2">
    <location>
        <position position="336"/>
    </location>
</feature>
<feature type="modified residue" description="Phosphoserine" evidence="2">
    <location>
        <position position="349"/>
    </location>
</feature>
<feature type="cross-link" description="Glycyl lysine isopeptide (Lys-Gly) (interchain with G-Cter in SUMO2)" evidence="2">
    <location>
        <position position="232"/>
    </location>
</feature>
<feature type="cross-link" description="Glycyl lysine isopeptide (Lys-Gly) (interchain with G-Cter in SUMO2)" evidence="2">
    <location>
        <position position="408"/>
    </location>
</feature>
<protein>
    <recommendedName>
        <fullName evidence="2">La-related protein 7</fullName>
    </recommendedName>
    <alternativeName>
        <fullName evidence="2">La ribonucleoprotein domain family member 7</fullName>
    </alternativeName>
</protein>
<gene>
    <name evidence="8" type="primary">Larp7</name>
</gene>
<name>LARP7_RAT</name>
<sequence length="571" mass="64949">METENQKTMEESTEKRKEEKKKRSRVKQVLADIAKQVDFWFGDANLHKDRFLREQIEKSRDGYVDISLLVSFNKMKKLTTDGKLIARALKSSSVVELDLEGTRIRRKKPLGERPKDEEERTVYVELLPKNVTHSWIERVFGKCGNVVYISIPHYKSTGDPKGFAFVEFETKEQAAKAIEFLNNPPEEAPRKPGIFPKTVKNKPIPSLRVAEEKKKKKKKKGRIKKEESVQAKELVVDSSSSGVSKATKRPRTASEGSEAETPEAPKQPAKKKKKRDKVETGGLPESKAGKRERSSAEDEDCLPPRPKLKKRAQKDGGGPAASEVSKEHRDLEFCSTEEEKEPGDRKGDSLSKGKRKHKKKHKERHKMGEEVIPLRVLSKTEWMDLKKEYLALQKASMASLKKTISQIKLESEMETESKAPPGSGQQCSTQEKVSAQGPQFVTGVIVKILSEDPLPGRKQVKDILATISEVVYIDLLEGDTECHARFKTPEDAQAVMNAQTEIKKKHSWNLEILSGDHEQRYWQKILVDRQAKLNQPREKKRGTEKLITKAEKIRLAKTQQASQHIRFSEYD</sequence>
<reference key="1">
    <citation type="journal article" date="2004" name="Genome Res.">
        <title>The status, quality, and expansion of the NIH full-length cDNA project: the Mammalian Gene Collection (MGC).</title>
        <authorList>
            <consortium name="The MGC Project Team"/>
        </authorList>
    </citation>
    <scope>NUCLEOTIDE SEQUENCE [LARGE SCALE MRNA]</scope>
    <source>
        <tissue>Testis</tissue>
    </source>
</reference>
<reference key="2">
    <citation type="submission" date="2007-09" db="UniProtKB">
        <authorList>
            <person name="Lubec G."/>
            <person name="Kang S.U."/>
            <person name="Lubec S."/>
        </authorList>
    </citation>
    <scope>PROTEIN SEQUENCE OF 8-15; 347-354 AND 409-418</scope>
    <scope>IDENTIFICATION BY MASS SPECTROMETRY</scope>
    <source>
        <strain>Sprague-Dawley</strain>
        <tissue>Brain</tissue>
    </source>
</reference>
<reference key="3">
    <citation type="journal article" date="2012" name="Nat. Commun.">
        <title>Quantitative maps of protein phosphorylation sites across 14 different rat organs and tissues.</title>
        <authorList>
            <person name="Lundby A."/>
            <person name="Secher A."/>
            <person name="Lage K."/>
            <person name="Nordsborg N.B."/>
            <person name="Dmytriyev A."/>
            <person name="Lundby C."/>
            <person name="Olsen J.V."/>
        </authorList>
    </citation>
    <scope>PHOSPHORYLATION [LARGE SCALE ANALYSIS] AT SER-254 AND SER-257</scope>
    <scope>IDENTIFICATION BY MASS SPECTROMETRY [LARGE SCALE ANALYSIS]</scope>
</reference>
<keyword id="KW-0007">Acetylation</keyword>
<keyword id="KW-0221">Differentiation</keyword>
<keyword id="KW-0903">Direct protein sequencing</keyword>
<keyword id="KW-1017">Isopeptide bond</keyword>
<keyword id="KW-0507">mRNA processing</keyword>
<keyword id="KW-0508">mRNA splicing</keyword>
<keyword id="KW-0539">Nucleus</keyword>
<keyword id="KW-0597">Phosphoprotein</keyword>
<keyword id="KW-1185">Reference proteome</keyword>
<keyword id="KW-0694">RNA-binding</keyword>
<keyword id="KW-0744">Spermatogenesis</keyword>
<keyword id="KW-0804">Transcription</keyword>
<keyword id="KW-0805">Transcription regulation</keyword>
<keyword id="KW-0832">Ubl conjugation</keyword>
<organism>
    <name type="scientific">Rattus norvegicus</name>
    <name type="common">Rat</name>
    <dbReference type="NCBI Taxonomy" id="10116"/>
    <lineage>
        <taxon>Eukaryota</taxon>
        <taxon>Metazoa</taxon>
        <taxon>Chordata</taxon>
        <taxon>Craniata</taxon>
        <taxon>Vertebrata</taxon>
        <taxon>Euteleostomi</taxon>
        <taxon>Mammalia</taxon>
        <taxon>Eutheria</taxon>
        <taxon>Euarchontoglires</taxon>
        <taxon>Glires</taxon>
        <taxon>Rodentia</taxon>
        <taxon>Myomorpha</taxon>
        <taxon>Muroidea</taxon>
        <taxon>Muridae</taxon>
        <taxon>Murinae</taxon>
        <taxon>Rattus</taxon>
    </lineage>
</organism>